<proteinExistence type="inferred from homology"/>
<protein>
    <recommendedName>
        <fullName>Catalase</fullName>
        <ecNumber>1.11.1.6</ecNumber>
    </recommendedName>
</protein>
<feature type="chain" id="PRO_0000085005" description="Catalase">
    <location>
        <begin position="1"/>
        <end position="504"/>
    </location>
</feature>
<feature type="region of interest" description="Disordered" evidence="3">
    <location>
        <begin position="1"/>
        <end position="25"/>
    </location>
</feature>
<feature type="active site" evidence="2">
    <location>
        <position position="56"/>
    </location>
</feature>
<feature type="active site" evidence="2">
    <location>
        <position position="129"/>
    </location>
</feature>
<feature type="binding site" description="axial binding residue" evidence="1">
    <location>
        <position position="339"/>
    </location>
    <ligand>
        <name>heme</name>
        <dbReference type="ChEBI" id="CHEBI:30413"/>
    </ligand>
    <ligandPart>
        <name>Fe</name>
        <dbReference type="ChEBI" id="CHEBI:18248"/>
    </ligandPart>
</feature>
<gene>
    <name type="primary">katA</name>
    <name type="ordered locus">SE_1016</name>
</gene>
<sequence length="504" mass="58213">MSKQDGKLTGLFGAPVSDRENSMTAGQRGPLLMQDVYYLEQISHFDREVIPERRMHAKGSGAFGTFTVTNDITQYTNAKIFSEVGKQTEMFARFSTVSGERGAADLERDIRGFALKFYTEDGNWDLVGNNTPVFFFRDPKLFISLNRAVKRDPRTNMRSAQNNWDFWTGLPEALHQVTILMSDRGMPKGFRNMHGFGSHTYSMYNDKGERVWVKYHFRTQQGIENYTDEEAAKIVGMDRDSSQRDLYNAIENGDYPKWKMYIQVMTEEQAKNHPDNPFDLTKVWYKKDYPLIEVGEFELNRNPENYFLDVEQAAFTPTNIVPGLDYSPDKMLQGRLFSYGDAQRYRLGVNHWQIPVNQPKGVGVENLCPFSRDGQMRFLDNNQGGGPHYYPNNQGIYESQPEHKKPPFPTDGDGYEYNYRQDDDNYFEQPGKLFRLQSEDAKERIFTNTANAMDGVSKDVKVRHIRHCYKADPEYGKGVAKALGIDINQIDLETNQDETYENFK</sequence>
<keyword id="KW-0349">Heme</keyword>
<keyword id="KW-0376">Hydrogen peroxide</keyword>
<keyword id="KW-0408">Iron</keyword>
<keyword id="KW-0479">Metal-binding</keyword>
<keyword id="KW-0560">Oxidoreductase</keyword>
<keyword id="KW-0575">Peroxidase</keyword>
<organism>
    <name type="scientific">Staphylococcus epidermidis (strain ATCC 12228 / FDA PCI 1200)</name>
    <dbReference type="NCBI Taxonomy" id="176280"/>
    <lineage>
        <taxon>Bacteria</taxon>
        <taxon>Bacillati</taxon>
        <taxon>Bacillota</taxon>
        <taxon>Bacilli</taxon>
        <taxon>Bacillales</taxon>
        <taxon>Staphylococcaceae</taxon>
        <taxon>Staphylococcus</taxon>
    </lineage>
</organism>
<accession>Q8CPD0</accession>
<reference key="1">
    <citation type="journal article" date="2003" name="Mol. Microbiol.">
        <title>Genome-based analysis of virulence genes in a non-biofilm-forming Staphylococcus epidermidis strain (ATCC 12228).</title>
        <authorList>
            <person name="Zhang Y.-Q."/>
            <person name="Ren S.-X."/>
            <person name="Li H.-L."/>
            <person name="Wang Y.-X."/>
            <person name="Fu G."/>
            <person name="Yang J."/>
            <person name="Qin Z.-Q."/>
            <person name="Miao Y.-G."/>
            <person name="Wang W.-Y."/>
            <person name="Chen R.-S."/>
            <person name="Shen Y."/>
            <person name="Chen Z."/>
            <person name="Yuan Z.-H."/>
            <person name="Zhao G.-P."/>
            <person name="Qu D."/>
            <person name="Danchin A."/>
            <person name="Wen Y.-M."/>
        </authorList>
    </citation>
    <scope>NUCLEOTIDE SEQUENCE [LARGE SCALE GENOMIC DNA]</scope>
    <source>
        <strain>ATCC 12228 / FDA PCI 1200</strain>
    </source>
</reference>
<name>CATA_STAES</name>
<dbReference type="EC" id="1.11.1.6"/>
<dbReference type="EMBL" id="AE015929">
    <property type="protein sequence ID" value="AAO04613.1"/>
    <property type="molecule type" value="Genomic_DNA"/>
</dbReference>
<dbReference type="RefSeq" id="NP_764571.1">
    <property type="nucleotide sequence ID" value="NC_004461.1"/>
</dbReference>
<dbReference type="RefSeq" id="WP_001831169.1">
    <property type="nucleotide sequence ID" value="NZ_WBME01000057.1"/>
</dbReference>
<dbReference type="SMR" id="Q8CPD0"/>
<dbReference type="KEGG" id="sep:SE_1016"/>
<dbReference type="PATRIC" id="fig|176280.10.peg.991"/>
<dbReference type="eggNOG" id="COG0753">
    <property type="taxonomic scope" value="Bacteria"/>
</dbReference>
<dbReference type="HOGENOM" id="CLU_010645_2_0_9"/>
<dbReference type="OrthoDB" id="9760293at2"/>
<dbReference type="Proteomes" id="UP000001411">
    <property type="component" value="Chromosome"/>
</dbReference>
<dbReference type="GO" id="GO:0005737">
    <property type="term" value="C:cytoplasm"/>
    <property type="evidence" value="ECO:0007669"/>
    <property type="project" value="TreeGrafter"/>
</dbReference>
<dbReference type="GO" id="GO:0004096">
    <property type="term" value="F:catalase activity"/>
    <property type="evidence" value="ECO:0007669"/>
    <property type="project" value="UniProtKB-EC"/>
</dbReference>
<dbReference type="GO" id="GO:0020037">
    <property type="term" value="F:heme binding"/>
    <property type="evidence" value="ECO:0007669"/>
    <property type="project" value="InterPro"/>
</dbReference>
<dbReference type="GO" id="GO:0046872">
    <property type="term" value="F:metal ion binding"/>
    <property type="evidence" value="ECO:0007669"/>
    <property type="project" value="UniProtKB-KW"/>
</dbReference>
<dbReference type="GO" id="GO:0042744">
    <property type="term" value="P:hydrogen peroxide catabolic process"/>
    <property type="evidence" value="ECO:0007669"/>
    <property type="project" value="UniProtKB-KW"/>
</dbReference>
<dbReference type="GO" id="GO:0042542">
    <property type="term" value="P:response to hydrogen peroxide"/>
    <property type="evidence" value="ECO:0007669"/>
    <property type="project" value="TreeGrafter"/>
</dbReference>
<dbReference type="CDD" id="cd08156">
    <property type="entry name" value="catalase_clade_3"/>
    <property type="match status" value="1"/>
</dbReference>
<dbReference type="FunFam" id="2.40.180.10:FF:000001">
    <property type="entry name" value="Catalase"/>
    <property type="match status" value="1"/>
</dbReference>
<dbReference type="Gene3D" id="2.40.180.10">
    <property type="entry name" value="Catalase core domain"/>
    <property type="match status" value="1"/>
</dbReference>
<dbReference type="InterPro" id="IPR018028">
    <property type="entry name" value="Catalase"/>
</dbReference>
<dbReference type="InterPro" id="IPR040333">
    <property type="entry name" value="Catalase_3"/>
</dbReference>
<dbReference type="InterPro" id="IPR024708">
    <property type="entry name" value="Catalase_AS"/>
</dbReference>
<dbReference type="InterPro" id="IPR024711">
    <property type="entry name" value="Catalase_clade1/3"/>
</dbReference>
<dbReference type="InterPro" id="IPR011614">
    <property type="entry name" value="Catalase_core"/>
</dbReference>
<dbReference type="InterPro" id="IPR002226">
    <property type="entry name" value="Catalase_haem_BS"/>
</dbReference>
<dbReference type="InterPro" id="IPR010582">
    <property type="entry name" value="Catalase_immune_responsive"/>
</dbReference>
<dbReference type="InterPro" id="IPR020835">
    <property type="entry name" value="Catalase_sf"/>
</dbReference>
<dbReference type="PANTHER" id="PTHR11465">
    <property type="entry name" value="CATALASE"/>
    <property type="match status" value="1"/>
</dbReference>
<dbReference type="PANTHER" id="PTHR11465:SF61">
    <property type="entry name" value="CATALASE"/>
    <property type="match status" value="1"/>
</dbReference>
<dbReference type="Pfam" id="PF00199">
    <property type="entry name" value="Catalase"/>
    <property type="match status" value="1"/>
</dbReference>
<dbReference type="Pfam" id="PF06628">
    <property type="entry name" value="Catalase-rel"/>
    <property type="match status" value="1"/>
</dbReference>
<dbReference type="PIRSF" id="PIRSF038928">
    <property type="entry name" value="Catalase_clade1-3"/>
    <property type="match status" value="1"/>
</dbReference>
<dbReference type="PRINTS" id="PR00067">
    <property type="entry name" value="CATALASE"/>
</dbReference>
<dbReference type="SMART" id="SM01060">
    <property type="entry name" value="Catalase"/>
    <property type="match status" value="1"/>
</dbReference>
<dbReference type="SUPFAM" id="SSF56634">
    <property type="entry name" value="Heme-dependent catalase-like"/>
    <property type="match status" value="1"/>
</dbReference>
<dbReference type="PROSITE" id="PS00437">
    <property type="entry name" value="CATALASE_1"/>
    <property type="match status" value="1"/>
</dbReference>
<dbReference type="PROSITE" id="PS00438">
    <property type="entry name" value="CATALASE_2"/>
    <property type="match status" value="1"/>
</dbReference>
<dbReference type="PROSITE" id="PS51402">
    <property type="entry name" value="CATALASE_3"/>
    <property type="match status" value="1"/>
</dbReference>
<comment type="function">
    <text evidence="1">Decomposes hydrogen peroxide into water and oxygen; serves to protect cells from the toxic effects of hydrogen peroxide.</text>
</comment>
<comment type="catalytic activity">
    <reaction evidence="2">
        <text>2 H2O2 = O2 + 2 H2O</text>
        <dbReference type="Rhea" id="RHEA:20309"/>
        <dbReference type="ChEBI" id="CHEBI:15377"/>
        <dbReference type="ChEBI" id="CHEBI:15379"/>
        <dbReference type="ChEBI" id="CHEBI:16240"/>
        <dbReference type="EC" id="1.11.1.6"/>
    </reaction>
</comment>
<comment type="cofactor">
    <cofactor evidence="1">
        <name>heme</name>
        <dbReference type="ChEBI" id="CHEBI:30413"/>
    </cofactor>
</comment>
<comment type="subunit">
    <text evidence="1">Homodimer.</text>
</comment>
<comment type="similarity">
    <text evidence="4">Belongs to the catalase family.</text>
</comment>
<evidence type="ECO:0000250" key="1"/>
<evidence type="ECO:0000255" key="2">
    <source>
        <dbReference type="PROSITE-ProRule" id="PRU10013"/>
    </source>
</evidence>
<evidence type="ECO:0000256" key="3">
    <source>
        <dbReference type="SAM" id="MobiDB-lite"/>
    </source>
</evidence>
<evidence type="ECO:0000305" key="4"/>